<name>TBB_LEIME</name>
<keyword id="KW-0963">Cytoplasm</keyword>
<keyword id="KW-0206">Cytoskeleton</keyword>
<keyword id="KW-0342">GTP-binding</keyword>
<keyword id="KW-0460">Magnesium</keyword>
<keyword id="KW-0479">Metal-binding</keyword>
<keyword id="KW-0493">Microtubule</keyword>
<keyword id="KW-0547">Nucleotide-binding</keyword>
<organism>
    <name type="scientific">Leishmania mexicana</name>
    <dbReference type="NCBI Taxonomy" id="5665"/>
    <lineage>
        <taxon>Eukaryota</taxon>
        <taxon>Discoba</taxon>
        <taxon>Euglenozoa</taxon>
        <taxon>Kinetoplastea</taxon>
        <taxon>Metakinetoplastina</taxon>
        <taxon>Trypanosomatida</taxon>
        <taxon>Trypanosomatidae</taxon>
        <taxon>Leishmaniinae</taxon>
        <taxon>Leishmania</taxon>
    </lineage>
</organism>
<sequence>MREIVSCQAGQCGNQIGSKFWEVIADEHGVDPTGSYQGDSDLQLERINVYFDESAGGRYVPRAVLMDLEPGTMDSVRAGPYGQLFRPDNFIFGQSGAGNNWAKGHYTEGAELIDSVLDVCRKEAESCDCLQGFQLSHSLGGGTGSGMGTLLISKLREEYPDRIMMTFSVIPSPRVSDTVVEPYNTTLSVHQLVENSDESMCIDNEALYDICFRTLKLTTPTFGDLNHLVAAVMSGVTCCLRFPGQLNSDLRNRLAVNLVPFPRLHFFMMGFAPLTSRGSQEYRQGLSVADVTQQMFDAKNMMQAADPRHGRYLTASALFRGRMSTKEVDEQMLNVQNKNSSYFIEWIPNNIKSSICDIPPKGLKMSVTFIGNNTCIQEMFRRVGEQFTGMFRRKRFLHWYTGEGMDEMEFTEAESNMNDLVSEYQQYQDATVEEEGEFDEEEEAY</sequence>
<accession>P21148</accession>
<proteinExistence type="inferred from homology"/>
<protein>
    <recommendedName>
        <fullName>Tubulin beta chain</fullName>
    </recommendedName>
    <alternativeName>
        <fullName>Beta-tubulin</fullName>
    </alternativeName>
</protein>
<dbReference type="EMBL" id="M23441">
    <property type="protein sequence ID" value="AAA29276.1"/>
    <property type="molecule type" value="Genomic_DNA"/>
</dbReference>
<dbReference type="PIR" id="A54515">
    <property type="entry name" value="A54515"/>
</dbReference>
<dbReference type="SMR" id="P21148"/>
<dbReference type="BindingDB" id="P21148"/>
<dbReference type="VEuPathDB" id="TriTrypDB:LmxM.32.0794"/>
<dbReference type="GO" id="GO:0005737">
    <property type="term" value="C:cytoplasm"/>
    <property type="evidence" value="ECO:0007669"/>
    <property type="project" value="UniProtKB-KW"/>
</dbReference>
<dbReference type="GO" id="GO:0005874">
    <property type="term" value="C:microtubule"/>
    <property type="evidence" value="ECO:0007669"/>
    <property type="project" value="UniProtKB-KW"/>
</dbReference>
<dbReference type="GO" id="GO:0005525">
    <property type="term" value="F:GTP binding"/>
    <property type="evidence" value="ECO:0007669"/>
    <property type="project" value="UniProtKB-KW"/>
</dbReference>
<dbReference type="GO" id="GO:0003924">
    <property type="term" value="F:GTPase activity"/>
    <property type="evidence" value="ECO:0007669"/>
    <property type="project" value="InterPro"/>
</dbReference>
<dbReference type="GO" id="GO:0046872">
    <property type="term" value="F:metal ion binding"/>
    <property type="evidence" value="ECO:0007669"/>
    <property type="project" value="UniProtKB-KW"/>
</dbReference>
<dbReference type="GO" id="GO:0005200">
    <property type="term" value="F:structural constituent of cytoskeleton"/>
    <property type="evidence" value="ECO:0007669"/>
    <property type="project" value="InterPro"/>
</dbReference>
<dbReference type="GO" id="GO:0007017">
    <property type="term" value="P:microtubule-based process"/>
    <property type="evidence" value="ECO:0007669"/>
    <property type="project" value="InterPro"/>
</dbReference>
<dbReference type="CDD" id="cd02187">
    <property type="entry name" value="beta_tubulin"/>
    <property type="match status" value="1"/>
</dbReference>
<dbReference type="FunFam" id="1.10.287.600:FF:000002">
    <property type="entry name" value="Tubulin beta chain"/>
    <property type="match status" value="1"/>
</dbReference>
<dbReference type="FunFam" id="3.30.1330.20:FF:000002">
    <property type="entry name" value="Tubulin beta chain"/>
    <property type="match status" value="1"/>
</dbReference>
<dbReference type="FunFam" id="3.40.50.1440:FF:000005">
    <property type="entry name" value="Tubulin beta chain"/>
    <property type="match status" value="1"/>
</dbReference>
<dbReference type="Gene3D" id="1.10.287.600">
    <property type="entry name" value="Helix hairpin bin"/>
    <property type="match status" value="1"/>
</dbReference>
<dbReference type="Gene3D" id="3.30.1330.20">
    <property type="entry name" value="Tubulin/FtsZ, C-terminal domain"/>
    <property type="match status" value="1"/>
</dbReference>
<dbReference type="Gene3D" id="3.40.50.1440">
    <property type="entry name" value="Tubulin/FtsZ, GTPase domain"/>
    <property type="match status" value="1"/>
</dbReference>
<dbReference type="InterPro" id="IPR013838">
    <property type="entry name" value="Beta-tubulin_BS"/>
</dbReference>
<dbReference type="InterPro" id="IPR002453">
    <property type="entry name" value="Beta_tubulin"/>
</dbReference>
<dbReference type="InterPro" id="IPR008280">
    <property type="entry name" value="Tub_FtsZ_C"/>
</dbReference>
<dbReference type="InterPro" id="IPR000217">
    <property type="entry name" value="Tubulin"/>
</dbReference>
<dbReference type="InterPro" id="IPR037103">
    <property type="entry name" value="Tubulin/FtsZ-like_C"/>
</dbReference>
<dbReference type="InterPro" id="IPR018316">
    <property type="entry name" value="Tubulin/FtsZ_2-layer-sand-dom"/>
</dbReference>
<dbReference type="InterPro" id="IPR036525">
    <property type="entry name" value="Tubulin/FtsZ_GTPase_sf"/>
</dbReference>
<dbReference type="InterPro" id="IPR023123">
    <property type="entry name" value="Tubulin_C"/>
</dbReference>
<dbReference type="InterPro" id="IPR017975">
    <property type="entry name" value="Tubulin_CS"/>
</dbReference>
<dbReference type="InterPro" id="IPR003008">
    <property type="entry name" value="Tubulin_FtsZ_GTPase"/>
</dbReference>
<dbReference type="PANTHER" id="PTHR11588">
    <property type="entry name" value="TUBULIN"/>
    <property type="match status" value="1"/>
</dbReference>
<dbReference type="Pfam" id="PF00091">
    <property type="entry name" value="Tubulin"/>
    <property type="match status" value="1"/>
</dbReference>
<dbReference type="Pfam" id="PF03953">
    <property type="entry name" value="Tubulin_C"/>
    <property type="match status" value="1"/>
</dbReference>
<dbReference type="PRINTS" id="PR01163">
    <property type="entry name" value="BETATUBULIN"/>
</dbReference>
<dbReference type="PRINTS" id="PR01161">
    <property type="entry name" value="TUBULIN"/>
</dbReference>
<dbReference type="SMART" id="SM00864">
    <property type="entry name" value="Tubulin"/>
    <property type="match status" value="1"/>
</dbReference>
<dbReference type="SMART" id="SM00865">
    <property type="entry name" value="Tubulin_C"/>
    <property type="match status" value="1"/>
</dbReference>
<dbReference type="SUPFAM" id="SSF55307">
    <property type="entry name" value="Tubulin C-terminal domain-like"/>
    <property type="match status" value="1"/>
</dbReference>
<dbReference type="SUPFAM" id="SSF52490">
    <property type="entry name" value="Tubulin nucleotide-binding domain-like"/>
    <property type="match status" value="1"/>
</dbReference>
<dbReference type="PROSITE" id="PS00227">
    <property type="entry name" value="TUBULIN"/>
    <property type="match status" value="1"/>
</dbReference>
<dbReference type="PROSITE" id="PS00228">
    <property type="entry name" value="TUBULIN_B_AUTOREG"/>
    <property type="match status" value="1"/>
</dbReference>
<comment type="function">
    <text>Tubulin is the major constituent of microtubules, a cylinder consisting of laterally associated linear protofilaments composed of alpha- and beta-tubulin heterodimers. Microtubules grow by the addition of GTP-tubulin dimers to the microtubule end, where a stabilizing cap forms. Below the cap, tubulin dimers are in GDP-bound state, owing to GTPase activity of alpha-tubulin.</text>
</comment>
<comment type="cofactor">
    <cofactor evidence="1">
        <name>Mg(2+)</name>
        <dbReference type="ChEBI" id="CHEBI:18420"/>
    </cofactor>
</comment>
<comment type="subunit">
    <text>Dimer of alpha and beta chains. A typical microtubule is a hollow water-filled tube with an outer diameter of 25 nm and an inner diameter of 15 nM. Alpha-beta heterodimers associate head-to-tail to form protofilaments running lengthwise along the microtubule wall with the beta-tubulin subunit facing the microtubule plus end conferring a structural polarity. Microtubules usually have 13 protofilaments but different protofilament numbers can be found in some organisms and specialized cells.</text>
</comment>
<comment type="subcellular location">
    <subcellularLocation>
        <location>Cytoplasm</location>
        <location>Cytoskeleton</location>
    </subcellularLocation>
</comment>
<comment type="similarity">
    <text evidence="3">Belongs to the tubulin family.</text>
</comment>
<feature type="chain" id="PRO_0000048299" description="Tubulin beta chain">
    <location>
        <begin position="1"/>
        <end position="445"/>
    </location>
</feature>
<feature type="binding site" evidence="2">
    <location>
        <position position="11"/>
    </location>
    <ligand>
        <name>GTP</name>
        <dbReference type="ChEBI" id="CHEBI:37565"/>
    </ligand>
</feature>
<feature type="binding site" evidence="1">
    <location>
        <position position="69"/>
    </location>
    <ligand>
        <name>GTP</name>
        <dbReference type="ChEBI" id="CHEBI:37565"/>
    </ligand>
</feature>
<feature type="binding site" evidence="1">
    <location>
        <position position="69"/>
    </location>
    <ligand>
        <name>Mg(2+)</name>
        <dbReference type="ChEBI" id="CHEBI:18420"/>
    </ligand>
</feature>
<feature type="binding site" evidence="2">
    <location>
        <position position="138"/>
    </location>
    <ligand>
        <name>GTP</name>
        <dbReference type="ChEBI" id="CHEBI:37565"/>
    </ligand>
</feature>
<feature type="binding site" evidence="2">
    <location>
        <position position="142"/>
    </location>
    <ligand>
        <name>GTP</name>
        <dbReference type="ChEBI" id="CHEBI:37565"/>
    </ligand>
</feature>
<feature type="binding site" evidence="2">
    <location>
        <position position="143"/>
    </location>
    <ligand>
        <name>GTP</name>
        <dbReference type="ChEBI" id="CHEBI:37565"/>
    </ligand>
</feature>
<feature type="binding site" evidence="2">
    <location>
        <position position="144"/>
    </location>
    <ligand>
        <name>GTP</name>
        <dbReference type="ChEBI" id="CHEBI:37565"/>
    </ligand>
</feature>
<feature type="binding site" evidence="2">
    <location>
        <position position="204"/>
    </location>
    <ligand>
        <name>GTP</name>
        <dbReference type="ChEBI" id="CHEBI:37565"/>
    </ligand>
</feature>
<feature type="binding site" evidence="2">
    <location>
        <position position="226"/>
    </location>
    <ligand>
        <name>GTP</name>
        <dbReference type="ChEBI" id="CHEBI:37565"/>
    </ligand>
</feature>
<reference key="1">
    <citation type="journal article" date="1988" name="Mol. Biochem. Parasitol.">
        <title>Beta tubulin gene of the parasitic protozoan Leishmania mexicana.</title>
        <authorList>
            <person name="Fong D."/>
            <person name="Lee B."/>
        </authorList>
    </citation>
    <scope>NUCLEOTIDE SEQUENCE [GENOMIC DNA]</scope>
</reference>
<evidence type="ECO:0000250" key="1">
    <source>
        <dbReference type="UniProtKB" id="P68363"/>
    </source>
</evidence>
<evidence type="ECO:0000250" key="2">
    <source>
        <dbReference type="UniProtKB" id="Q13509"/>
    </source>
</evidence>
<evidence type="ECO:0000305" key="3"/>